<reference key="1">
    <citation type="journal article" date="2009" name="PLoS Genet.">
        <title>Organised genome dynamics in the Escherichia coli species results in highly diverse adaptive paths.</title>
        <authorList>
            <person name="Touchon M."/>
            <person name="Hoede C."/>
            <person name="Tenaillon O."/>
            <person name="Barbe V."/>
            <person name="Baeriswyl S."/>
            <person name="Bidet P."/>
            <person name="Bingen E."/>
            <person name="Bonacorsi S."/>
            <person name="Bouchier C."/>
            <person name="Bouvet O."/>
            <person name="Calteau A."/>
            <person name="Chiapello H."/>
            <person name="Clermont O."/>
            <person name="Cruveiller S."/>
            <person name="Danchin A."/>
            <person name="Diard M."/>
            <person name="Dossat C."/>
            <person name="Karoui M.E."/>
            <person name="Frapy E."/>
            <person name="Garry L."/>
            <person name="Ghigo J.M."/>
            <person name="Gilles A.M."/>
            <person name="Johnson J."/>
            <person name="Le Bouguenec C."/>
            <person name="Lescat M."/>
            <person name="Mangenot S."/>
            <person name="Martinez-Jehanne V."/>
            <person name="Matic I."/>
            <person name="Nassif X."/>
            <person name="Oztas S."/>
            <person name="Petit M.A."/>
            <person name="Pichon C."/>
            <person name="Rouy Z."/>
            <person name="Ruf C.S."/>
            <person name="Schneider D."/>
            <person name="Tourret J."/>
            <person name="Vacherie B."/>
            <person name="Vallenet D."/>
            <person name="Medigue C."/>
            <person name="Rocha E.P.C."/>
            <person name="Denamur E."/>
        </authorList>
    </citation>
    <scope>NUCLEOTIDE SEQUENCE [LARGE SCALE GENOMIC DNA]</scope>
    <source>
        <strain>IAI1</strain>
    </source>
</reference>
<proteinExistence type="inferred from homology"/>
<feature type="chain" id="PRO_1000140289" description="HTH-type transcriptional repressor PurR">
    <location>
        <begin position="1"/>
        <end position="341"/>
    </location>
</feature>
<feature type="domain" description="HTH lacI-type" evidence="1">
    <location>
        <begin position="2"/>
        <end position="56"/>
    </location>
</feature>
<feature type="DNA-binding region" description="H-T-H motif" evidence="1">
    <location>
        <begin position="4"/>
        <end position="23"/>
    </location>
</feature>
<feature type="DNA-binding region" evidence="1">
    <location>
        <begin position="48"/>
        <end position="56"/>
    </location>
</feature>
<feature type="binding site" evidence="1">
    <location>
        <position position="73"/>
    </location>
    <ligand>
        <name>hypoxanthine</name>
        <dbReference type="ChEBI" id="CHEBI:17368"/>
    </ligand>
</feature>
<feature type="binding site" evidence="1">
    <location>
        <position position="190"/>
    </location>
    <ligand>
        <name>hypoxanthine</name>
        <dbReference type="ChEBI" id="CHEBI:17368"/>
    </ligand>
</feature>
<feature type="binding site" evidence="1">
    <location>
        <position position="192"/>
    </location>
    <ligand>
        <name>hypoxanthine</name>
        <dbReference type="ChEBI" id="CHEBI:17368"/>
    </ligand>
</feature>
<feature type="binding site" evidence="1">
    <location>
        <position position="221"/>
    </location>
    <ligand>
        <name>hypoxanthine</name>
        <dbReference type="ChEBI" id="CHEBI:17368"/>
    </ligand>
</feature>
<feature type="binding site" evidence="1">
    <location>
        <position position="275"/>
    </location>
    <ligand>
        <name>hypoxanthine</name>
        <dbReference type="ChEBI" id="CHEBI:17368"/>
    </ligand>
</feature>
<protein>
    <recommendedName>
        <fullName evidence="1">HTH-type transcriptional repressor PurR</fullName>
    </recommendedName>
    <alternativeName>
        <fullName evidence="1">Pur regulon repressor</fullName>
    </alternativeName>
    <alternativeName>
        <fullName evidence="1">Purine nucleotide synthesis repressor</fullName>
    </alternativeName>
</protein>
<accession>B7M0L5</accession>
<gene>
    <name evidence="1" type="primary">purR</name>
    <name type="ordered locus">ECIAI1_1710</name>
</gene>
<organism>
    <name type="scientific">Escherichia coli O8 (strain IAI1)</name>
    <dbReference type="NCBI Taxonomy" id="585034"/>
    <lineage>
        <taxon>Bacteria</taxon>
        <taxon>Pseudomonadati</taxon>
        <taxon>Pseudomonadota</taxon>
        <taxon>Gammaproteobacteria</taxon>
        <taxon>Enterobacterales</taxon>
        <taxon>Enterobacteriaceae</taxon>
        <taxon>Escherichia</taxon>
    </lineage>
</organism>
<sequence length="341" mass="38175">MATIKDVAKRANVSTTTVSHVINKTRFVAEETRNAVWAAIKELHYSPSAVARSLKVNHTKSIGLLATSSEAAYFAEIIEAVEKNCFQKGYTLILGNAWNNLEKQRAYLSMMAQKRVDGLLVMCSEYPEPLLAMLEEYRHIPMVVMDWGEAKADFTDAVIDNAFEGGYMAGRYLIERGHREIGVIPGPLERNTGAGRLAGFMKAMEEAMIKVPESWIVQGDFEPESGYRAMQQILSQPHRPTAVFCGGDIMAMGALCAADEMGLRVPQDVSLIGYDNVRNARYFTPALTTIHQPKDSLGETAFNMLLDRIVNKREEPQSIEVHPRLIERRSVADGPFRDYRR</sequence>
<keyword id="KW-0238">DNA-binding</keyword>
<keyword id="KW-0658">Purine biosynthesis</keyword>
<keyword id="KW-0678">Repressor</keyword>
<keyword id="KW-0804">Transcription</keyword>
<keyword id="KW-0805">Transcription regulation</keyword>
<evidence type="ECO:0000255" key="1">
    <source>
        <dbReference type="HAMAP-Rule" id="MF_01277"/>
    </source>
</evidence>
<name>PURR_ECO8A</name>
<dbReference type="EMBL" id="CU928160">
    <property type="protein sequence ID" value="CAQ98567.1"/>
    <property type="molecule type" value="Genomic_DNA"/>
</dbReference>
<dbReference type="RefSeq" id="WP_000190982.1">
    <property type="nucleotide sequence ID" value="NC_011741.1"/>
</dbReference>
<dbReference type="SMR" id="B7M0L5"/>
<dbReference type="GeneID" id="75204504"/>
<dbReference type="KEGG" id="ecr:ECIAI1_1710"/>
<dbReference type="HOGENOM" id="CLU_037628_6_2_6"/>
<dbReference type="UniPathway" id="UPA00488"/>
<dbReference type="GO" id="GO:0003700">
    <property type="term" value="F:DNA-binding transcription factor activity"/>
    <property type="evidence" value="ECO:0007669"/>
    <property type="project" value="TreeGrafter"/>
</dbReference>
<dbReference type="GO" id="GO:0000976">
    <property type="term" value="F:transcription cis-regulatory region binding"/>
    <property type="evidence" value="ECO:0007669"/>
    <property type="project" value="TreeGrafter"/>
</dbReference>
<dbReference type="GO" id="GO:0045892">
    <property type="term" value="P:negative regulation of DNA-templated transcription"/>
    <property type="evidence" value="ECO:0007669"/>
    <property type="project" value="UniProtKB-UniRule"/>
</dbReference>
<dbReference type="GO" id="GO:0006164">
    <property type="term" value="P:purine nucleotide biosynthetic process"/>
    <property type="evidence" value="ECO:0007669"/>
    <property type="project" value="UniProtKB-UniPathway"/>
</dbReference>
<dbReference type="CDD" id="cd01392">
    <property type="entry name" value="HTH_LacI"/>
    <property type="match status" value="1"/>
</dbReference>
<dbReference type="CDD" id="cd06275">
    <property type="entry name" value="PBP1_PurR"/>
    <property type="match status" value="1"/>
</dbReference>
<dbReference type="FunFam" id="1.10.260.40:FF:000002">
    <property type="entry name" value="HTH-type transcriptional repressor PurR"/>
    <property type="match status" value="1"/>
</dbReference>
<dbReference type="FunFam" id="3.40.50.2300:FF:000045">
    <property type="entry name" value="HTH-type transcriptional repressor PurR"/>
    <property type="match status" value="1"/>
</dbReference>
<dbReference type="Gene3D" id="3.40.50.2300">
    <property type="match status" value="2"/>
</dbReference>
<dbReference type="Gene3D" id="1.10.260.40">
    <property type="entry name" value="lambda repressor-like DNA-binding domains"/>
    <property type="match status" value="1"/>
</dbReference>
<dbReference type="HAMAP" id="MF_01277">
    <property type="entry name" value="HTH_type_PurR"/>
    <property type="match status" value="1"/>
</dbReference>
<dbReference type="InterPro" id="IPR000843">
    <property type="entry name" value="HTH_LacI"/>
</dbReference>
<dbReference type="InterPro" id="IPR046335">
    <property type="entry name" value="LacI/GalR-like_sensor"/>
</dbReference>
<dbReference type="InterPro" id="IPR010982">
    <property type="entry name" value="Lambda_DNA-bd_dom_sf"/>
</dbReference>
<dbReference type="InterPro" id="IPR028082">
    <property type="entry name" value="Peripla_BP_I"/>
</dbReference>
<dbReference type="InterPro" id="IPR023588">
    <property type="entry name" value="Tscrpt_reg_HTH_PurR"/>
</dbReference>
<dbReference type="NCBIfam" id="NF007979">
    <property type="entry name" value="PRK10703.1"/>
    <property type="match status" value="1"/>
</dbReference>
<dbReference type="PANTHER" id="PTHR30146:SF148">
    <property type="entry name" value="HTH-TYPE TRANSCRIPTIONAL REPRESSOR PURR-RELATED"/>
    <property type="match status" value="1"/>
</dbReference>
<dbReference type="PANTHER" id="PTHR30146">
    <property type="entry name" value="LACI-RELATED TRANSCRIPTIONAL REPRESSOR"/>
    <property type="match status" value="1"/>
</dbReference>
<dbReference type="Pfam" id="PF00356">
    <property type="entry name" value="LacI"/>
    <property type="match status" value="1"/>
</dbReference>
<dbReference type="Pfam" id="PF13377">
    <property type="entry name" value="Peripla_BP_3"/>
    <property type="match status" value="1"/>
</dbReference>
<dbReference type="PRINTS" id="PR00036">
    <property type="entry name" value="HTHLACI"/>
</dbReference>
<dbReference type="SMART" id="SM00354">
    <property type="entry name" value="HTH_LACI"/>
    <property type="match status" value="1"/>
</dbReference>
<dbReference type="SUPFAM" id="SSF47413">
    <property type="entry name" value="lambda repressor-like DNA-binding domains"/>
    <property type="match status" value="1"/>
</dbReference>
<dbReference type="SUPFAM" id="SSF53822">
    <property type="entry name" value="Periplasmic binding protein-like I"/>
    <property type="match status" value="1"/>
</dbReference>
<dbReference type="PROSITE" id="PS00356">
    <property type="entry name" value="HTH_LACI_1"/>
    <property type="match status" value="1"/>
</dbReference>
<dbReference type="PROSITE" id="PS50932">
    <property type="entry name" value="HTH_LACI_2"/>
    <property type="match status" value="1"/>
</dbReference>
<comment type="function">
    <text evidence="1">Is the main repressor of the genes involved in the de novo synthesis of purine nucleotides, regulating purB, purC, purEK, purF, purHD, purL, purMN and guaBA expression. PurR is allosterically activated to bind its cognate DNA by binding the purine corepressors, hypoxanthine or guanine, thereby effecting transcription repression.</text>
</comment>
<comment type="pathway">
    <text>Purine metabolism; purine nucleotide biosynthesis [regulation].</text>
</comment>
<comment type="subunit">
    <text evidence="1">Homodimer.</text>
</comment>
<comment type="domain">
    <text evidence="1">Consists of two structural and functional domains: an N-terminal DNA-binding domain, approximately the first 60 residues, and a larger C-terminal domain, approximately 280 residues, which imparts the function of corepressor binding and oligomerization.</text>
</comment>